<name>RP132_MONPZ</name>
<organism>
    <name type="scientific">Monkeypox virus (strain Zaire-96-I-16)</name>
    <name type="common">MPX</name>
    <dbReference type="NCBI Taxonomy" id="619591"/>
    <lineage>
        <taxon>Viruses</taxon>
        <taxon>Varidnaviria</taxon>
        <taxon>Bamfordvirae</taxon>
        <taxon>Nucleocytoviricota</taxon>
        <taxon>Pokkesviricetes</taxon>
        <taxon>Chitovirales</taxon>
        <taxon>Poxviridae</taxon>
        <taxon>Chordopoxvirinae</taxon>
        <taxon>Orthopoxvirus</taxon>
        <taxon>Monkeypox virus</taxon>
    </lineage>
</organism>
<organismHost>
    <name type="scientific">Cynomys gunnisoni</name>
    <name type="common">Gunnison's prairie dog</name>
    <name type="synonym">Spermophilus gunnisoni</name>
    <dbReference type="NCBI Taxonomy" id="45479"/>
</organismHost>
<organismHost>
    <name type="scientific">Cynomys leucurus</name>
    <name type="common">White-tailed prairie dog</name>
    <dbReference type="NCBI Taxonomy" id="99825"/>
</organismHost>
<organismHost>
    <name type="scientific">Cynomys ludovicianus</name>
    <name type="common">Black-tailed prairie dog</name>
    <dbReference type="NCBI Taxonomy" id="45480"/>
</organismHost>
<organismHost>
    <name type="scientific">Cynomys mexicanus</name>
    <name type="common">Mexican prairie dog</name>
    <dbReference type="NCBI Taxonomy" id="99826"/>
</organismHost>
<organismHost>
    <name type="scientific">Cynomys parvidens</name>
    <name type="common">Utah prairie dog</name>
    <dbReference type="NCBI Taxonomy" id="99827"/>
</organismHost>
<organismHost>
    <name type="scientific">Gliridae</name>
    <name type="common">dormice</name>
    <dbReference type="NCBI Taxonomy" id="30650"/>
</organismHost>
<organismHost>
    <name type="scientific">Heliosciurus ruwenzorii</name>
    <name type="common">Ruwenzori sun squirrel</name>
    <dbReference type="NCBI Taxonomy" id="226685"/>
</organismHost>
<organismHost>
    <name type="scientific">Homo sapiens</name>
    <name type="common">Human</name>
    <dbReference type="NCBI Taxonomy" id="9606"/>
</organismHost>
<organismHost>
    <name type="scientific">Mus musculus</name>
    <name type="common">Mouse</name>
    <dbReference type="NCBI Taxonomy" id="10090"/>
</organismHost>
<comment type="function">
    <text evidence="1">Part of the DNA-dependent RNA polymerase which catalyzes the transcription of viral DNA into RNA using the four ribonucleoside triphosphates as substrates. Responsible for the transcription of early, intermediate and late genes. DNA-dependent RNA polymerase associates with the early transcription factor (ETF), itself composed of D6 and A7, thereby allowing the early genes transcription. Late transcription, and probably also intermediate transcription, require newly synthesized RNA polymerase (By similarity).</text>
</comment>
<comment type="catalytic activity">
    <reaction>
        <text>RNA(n) + a ribonucleoside 5'-triphosphate = RNA(n+1) + diphosphate</text>
        <dbReference type="Rhea" id="RHEA:21248"/>
        <dbReference type="Rhea" id="RHEA-COMP:14527"/>
        <dbReference type="Rhea" id="RHEA-COMP:17342"/>
        <dbReference type="ChEBI" id="CHEBI:33019"/>
        <dbReference type="ChEBI" id="CHEBI:61557"/>
        <dbReference type="ChEBI" id="CHEBI:140395"/>
        <dbReference type="EC" id="2.7.7.6"/>
    </reaction>
</comment>
<comment type="subunit">
    <text evidence="1">The DNA-dependent RNA polymerase used for intermediate and late genes expression consists of eight subunits (147) kDa, (133) kDa, (35) kDa, (30) kDa, (22) kDa, (19) kDa, (18) kDa and (7) kDa totalling more than 500 kDa in mass. The same holoenzyme, with the addition of the transcription-specificity factor RAP94, is used for early gene expression (By similarity).</text>
</comment>
<comment type="subcellular location">
    <subcellularLocation>
        <location evidence="1">Virion</location>
    </subcellularLocation>
    <text evidence="1">All the enzymes and other proteins required to synthesize early mRNAs are packaged within the virion core along with the DNA genome. This is necessary because viral early mRNAs are synthesized within minutes after virus entry into the cell and are extruded through pores in the core particle (By similarity).</text>
</comment>
<comment type="similarity">
    <text evidence="2">Belongs to the RNA polymerase beta chain family.</text>
</comment>
<dbReference type="EC" id="2.7.7.6"/>
<dbReference type="EMBL" id="AF380138">
    <property type="protein sequence ID" value="AAL40593.1"/>
    <property type="molecule type" value="Genomic_DNA"/>
</dbReference>
<dbReference type="SMR" id="Q8V4V3"/>
<dbReference type="KEGG" id="vg:928976"/>
<dbReference type="Proteomes" id="UP000101269">
    <property type="component" value="Genome"/>
</dbReference>
<dbReference type="GO" id="GO:0000428">
    <property type="term" value="C:DNA-directed RNA polymerase complex"/>
    <property type="evidence" value="ECO:0007669"/>
    <property type="project" value="UniProtKB-KW"/>
</dbReference>
<dbReference type="GO" id="GO:0044423">
    <property type="term" value="C:virion component"/>
    <property type="evidence" value="ECO:0007669"/>
    <property type="project" value="UniProtKB-KW"/>
</dbReference>
<dbReference type="GO" id="GO:0003677">
    <property type="term" value="F:DNA binding"/>
    <property type="evidence" value="ECO:0007669"/>
    <property type="project" value="InterPro"/>
</dbReference>
<dbReference type="GO" id="GO:0003899">
    <property type="term" value="F:DNA-directed RNA polymerase activity"/>
    <property type="evidence" value="ECO:0007669"/>
    <property type="project" value="UniProtKB-EC"/>
</dbReference>
<dbReference type="GO" id="GO:0046872">
    <property type="term" value="F:metal ion binding"/>
    <property type="evidence" value="ECO:0007669"/>
    <property type="project" value="UniProtKB-KW"/>
</dbReference>
<dbReference type="GO" id="GO:0032549">
    <property type="term" value="F:ribonucleoside binding"/>
    <property type="evidence" value="ECO:0007669"/>
    <property type="project" value="InterPro"/>
</dbReference>
<dbReference type="GO" id="GO:0006351">
    <property type="term" value="P:DNA-templated transcription"/>
    <property type="evidence" value="ECO:0007669"/>
    <property type="project" value="InterPro"/>
</dbReference>
<dbReference type="Gene3D" id="2.40.50.150">
    <property type="match status" value="1"/>
</dbReference>
<dbReference type="Gene3D" id="3.90.1100.10">
    <property type="match status" value="2"/>
</dbReference>
<dbReference type="Gene3D" id="2.40.270.10">
    <property type="entry name" value="DNA-directed RNA polymerase, subunit 2, domain 6"/>
    <property type="match status" value="1"/>
</dbReference>
<dbReference type="Gene3D" id="3.90.1800.10">
    <property type="entry name" value="RNA polymerase alpha subunit dimerisation domain"/>
    <property type="match status" value="1"/>
</dbReference>
<dbReference type="InterPro" id="IPR015712">
    <property type="entry name" value="DNA-dir_RNA_pol_su2"/>
</dbReference>
<dbReference type="InterPro" id="IPR007120">
    <property type="entry name" value="DNA-dir_RNAP_su2_dom"/>
</dbReference>
<dbReference type="InterPro" id="IPR037033">
    <property type="entry name" value="DNA-dir_RNAP_su2_hyb_sf"/>
</dbReference>
<dbReference type="InterPro" id="IPR024390">
    <property type="entry name" value="RNA_pol_132_poxvirus"/>
</dbReference>
<dbReference type="InterPro" id="IPR007121">
    <property type="entry name" value="RNA_pol_bsu_CS"/>
</dbReference>
<dbReference type="InterPro" id="IPR007645">
    <property type="entry name" value="RNA_pol_Rpb2_3"/>
</dbReference>
<dbReference type="InterPro" id="IPR007647">
    <property type="entry name" value="RNA_pol_Rpb2_5"/>
</dbReference>
<dbReference type="InterPro" id="IPR007641">
    <property type="entry name" value="RNA_pol_Rpb2_7"/>
</dbReference>
<dbReference type="InterPro" id="IPR014724">
    <property type="entry name" value="RNA_pol_RPB2_OB-fold"/>
</dbReference>
<dbReference type="PANTHER" id="PTHR20856">
    <property type="entry name" value="DNA-DIRECTED RNA POLYMERASE I SUBUNIT 2"/>
    <property type="match status" value="1"/>
</dbReference>
<dbReference type="Pfam" id="PF04565">
    <property type="entry name" value="RNA_pol_Rpb2_3"/>
    <property type="match status" value="1"/>
</dbReference>
<dbReference type="Pfam" id="PF04567">
    <property type="entry name" value="RNA_pol_Rpb2_5"/>
    <property type="match status" value="1"/>
</dbReference>
<dbReference type="Pfam" id="PF00562">
    <property type="entry name" value="RNA_pol_Rpb2_6"/>
    <property type="match status" value="1"/>
</dbReference>
<dbReference type="Pfam" id="PF04560">
    <property type="entry name" value="RNA_pol_Rpb2_7"/>
    <property type="match status" value="1"/>
</dbReference>
<dbReference type="Pfam" id="PF12415">
    <property type="entry name" value="rpo132"/>
    <property type="match status" value="1"/>
</dbReference>
<dbReference type="SUPFAM" id="SSF64484">
    <property type="entry name" value="beta and beta-prime subunits of DNA dependent RNA-polymerase"/>
    <property type="match status" value="1"/>
</dbReference>
<dbReference type="PROSITE" id="PS01166">
    <property type="entry name" value="RNA_POL_BETA"/>
    <property type="match status" value="1"/>
</dbReference>
<evidence type="ECO:0000250" key="1"/>
<evidence type="ECO:0000305" key="2"/>
<sequence length="1164" mass="133435">MKKNTVSEMDQRLGYKFLVPDPKAGVFYRPLHFQYVSYSNFILHRLHEILTVKRPLLSFKNNTERIMIEISNVKVTPPDYSPIIASIKGKSYDALATFTVNIFKEVMTKEGISITKISSYEGKDSHLIKIPLLIGYGNKNPLDTAKYLVPNVIGGVFINKQSVEKVGINLVEKITTWPKFRVVKPNSFTFSFSSVSPPNVLPTRYRHYKISLDISQLEASNISSTKTFITVNIVLLSQYLSRVSLEFIRRSLSYDMPPEVVYLVNAIIDSAKRLTESITDFDIDTYINDLVEAEHIKQKSQLTINEFKYEMLHNFLPHMNYTPDQLKGFYMISLLRKFLYCIYHTSRYPDRDSMVCHRILTYGKYFETLAHDELENYIGNIRNDIMNNHKNRGTYAVNIHVLTTPGLNHAFSSLLSGKFKKSDGSYRTHPHYSWMQNISIPRSVGFYPDQVKISKMFSVRKYHPSQYLYFCSSDVPERGPQVGLVSQLSVLSSITNILTSEYLDLEKKICEYIRSYYKDDISYFETGFPITIENALVASLNPNMICDFVTDFRRRKRMGFFGNLEVGITLVRDHMNEIRINIGAGRLVRPFLVVDNGELMTDVCPELESRLDDMTFSDIQKEFPHVIEMVDIDQFTFSNVCESVQKFRMMSKDERKQYDLCDFPAEFRDGYVASSLVGINHNSGPRAILGCAQAKQAISCLSSDIRNKIDNGIHLMYPERPIVISKALETSKIAANCFGQHVTIALMSYKGINQEDGIIIKKQFIQRGGLDIVTAKKHQVEIPLENFNNKERDRSNAYSKLESNGLVRLNAFLESGDAMARNISSRTLEDDFARDNQISFDVSEKYTDMYKSRVERVQVELTDKVKVRVLTMKERRPILGDKFTTRTSQKGTVAYIADETELPYDENGITPDVIINSTSIFSRKTISMLIEVILTAAYSTKPYNNKGENRPVCFPSSNETSIDAYMQFAKQCYEYSNPKLSEEELSDKIFCEKILYDPETDKPYESKVFFGPIYYLRLRHLTQDKATVRCRGKKTKLIRQANEGRKRGGGIKFGEMERDCLIAHGAANTITEVLKDSEEDYQDVYICENCGDIAAQIKSINTCLRCSKLNLSPLLTKIDTTHVSKVFLTQMNARGVKVKLDFERRPPSFYKPLDKVDLKPSFLV</sequence>
<accession>Q8V4V3</accession>
<proteinExistence type="inferred from homology"/>
<protein>
    <recommendedName>
        <fullName>DNA-directed RNA polymerase 132 kDa polypeptide</fullName>
        <ecNumber>2.7.7.6</ecNumber>
    </recommendedName>
</protein>
<feature type="chain" id="PRO_0000048068" description="DNA-directed RNA polymerase 132 kDa polypeptide">
    <location>
        <begin position="1"/>
        <end position="1164"/>
    </location>
</feature>
<keyword id="KW-0240">DNA-directed RNA polymerase</keyword>
<keyword id="KW-0479">Metal-binding</keyword>
<keyword id="KW-0548">Nucleotidyltransferase</keyword>
<keyword id="KW-0804">Transcription</keyword>
<keyword id="KW-0808">Transferase</keyword>
<keyword id="KW-0946">Virion</keyword>
<gene>
    <name type="primary">RPO132</name>
    <name type="ORF">A25R</name>
</gene>
<reference key="1">
    <citation type="journal article" date="2001" name="FEBS Lett.">
        <title>Human monkeypox and smallpox viruses: genomic comparison.</title>
        <authorList>
            <person name="Shchelkunov S.N."/>
            <person name="Totmenin A.V."/>
            <person name="Babkin I.V."/>
            <person name="Safronov P.F."/>
            <person name="Ryazankina O.I."/>
            <person name="Petrov N.A."/>
            <person name="Gutorov V.V."/>
            <person name="Uvarova E.A."/>
            <person name="Mikheev M.V."/>
            <person name="Sisler J.R."/>
            <person name="Esposito J.J."/>
            <person name="Jahrling P.B."/>
            <person name="Moss B."/>
            <person name="Sandakhchiev L.S."/>
        </authorList>
    </citation>
    <scope>NUCLEOTIDE SEQUENCE [LARGE SCALE GENOMIC DNA]</scope>
    <source>
        <strain>Zaire-96-I-16</strain>
    </source>
</reference>